<dbReference type="EC" id="3.1.4.58" evidence="1"/>
<dbReference type="EMBL" id="AE000657">
    <property type="protein sequence ID" value="AAC06930.1"/>
    <property type="molecule type" value="Genomic_DNA"/>
</dbReference>
<dbReference type="PIR" id="D70367">
    <property type="entry name" value="D70367"/>
</dbReference>
<dbReference type="RefSeq" id="NP_213528.1">
    <property type="nucleotide sequence ID" value="NC_000918.1"/>
</dbReference>
<dbReference type="RefSeq" id="WP_010880466.1">
    <property type="nucleotide sequence ID" value="NC_000918.1"/>
</dbReference>
<dbReference type="SMR" id="O66967"/>
<dbReference type="FunCoup" id="O66967">
    <property type="interactions" value="18"/>
</dbReference>
<dbReference type="STRING" id="224324.aq_768"/>
<dbReference type="EnsemblBacteria" id="AAC06930">
    <property type="protein sequence ID" value="AAC06930"/>
    <property type="gene ID" value="aq_768"/>
</dbReference>
<dbReference type="KEGG" id="aae:aq_768"/>
<dbReference type="PATRIC" id="fig|224324.8.peg.611"/>
<dbReference type="eggNOG" id="COG1514">
    <property type="taxonomic scope" value="Bacteria"/>
</dbReference>
<dbReference type="HOGENOM" id="CLU_081251_3_2_0"/>
<dbReference type="InParanoid" id="O66967"/>
<dbReference type="OrthoDB" id="9789350at2"/>
<dbReference type="Proteomes" id="UP000000798">
    <property type="component" value="Chromosome"/>
</dbReference>
<dbReference type="GO" id="GO:0005829">
    <property type="term" value="C:cytosol"/>
    <property type="evidence" value="ECO:0000318"/>
    <property type="project" value="GO_Central"/>
</dbReference>
<dbReference type="GO" id="GO:0004113">
    <property type="term" value="F:2',3'-cyclic-nucleotide 3'-phosphodiesterase activity"/>
    <property type="evidence" value="ECO:0007669"/>
    <property type="project" value="InterPro"/>
</dbReference>
<dbReference type="GO" id="GO:0034237">
    <property type="term" value="F:protein kinase A regulatory subunit binding"/>
    <property type="evidence" value="ECO:0000318"/>
    <property type="project" value="GO_Central"/>
</dbReference>
<dbReference type="GO" id="GO:0008664">
    <property type="term" value="F:RNA 2',3'-cyclic 3'-phosphodiesterase activity"/>
    <property type="evidence" value="ECO:0007669"/>
    <property type="project" value="UniProtKB-EC"/>
</dbReference>
<dbReference type="FunFam" id="3.90.1140.10:FF:000009">
    <property type="entry name" value="RNA 2',3'-cyclic phosphodiesterase"/>
    <property type="match status" value="1"/>
</dbReference>
<dbReference type="Gene3D" id="3.90.1140.10">
    <property type="entry name" value="Cyclic phosphodiesterase"/>
    <property type="match status" value="1"/>
</dbReference>
<dbReference type="HAMAP" id="MF_01940">
    <property type="entry name" value="RNA_CPDase"/>
    <property type="match status" value="1"/>
</dbReference>
<dbReference type="InterPro" id="IPR052641">
    <property type="entry name" value="AKAP7_isoform_gamma"/>
</dbReference>
<dbReference type="InterPro" id="IPR009097">
    <property type="entry name" value="Cyclic_Pdiesterase"/>
</dbReference>
<dbReference type="InterPro" id="IPR014051">
    <property type="entry name" value="Phosphoesterase_HXTX"/>
</dbReference>
<dbReference type="InterPro" id="IPR004175">
    <property type="entry name" value="RNA_CPDase"/>
</dbReference>
<dbReference type="NCBIfam" id="TIGR02258">
    <property type="entry name" value="2_5_ligase"/>
    <property type="match status" value="1"/>
</dbReference>
<dbReference type="PANTHER" id="PTHR15934:SF2">
    <property type="entry name" value="A-KINASE ANCHOR PROTEIN 7-LIKE PHOSPHOESTERASE DOMAIN-CONTAINING PROTEIN"/>
    <property type="match status" value="1"/>
</dbReference>
<dbReference type="PANTHER" id="PTHR15934">
    <property type="entry name" value="RNA 2',3'-CYCLIC PHOSPHODIESTERASE"/>
    <property type="match status" value="1"/>
</dbReference>
<dbReference type="Pfam" id="PF02834">
    <property type="entry name" value="LigT_PEase"/>
    <property type="match status" value="2"/>
</dbReference>
<dbReference type="SUPFAM" id="SSF55144">
    <property type="entry name" value="LigT-like"/>
    <property type="match status" value="1"/>
</dbReference>
<organism>
    <name type="scientific">Aquifex aeolicus (strain VF5)</name>
    <dbReference type="NCBI Taxonomy" id="224324"/>
    <lineage>
        <taxon>Bacteria</taxon>
        <taxon>Pseudomonadati</taxon>
        <taxon>Aquificota</taxon>
        <taxon>Aquificia</taxon>
        <taxon>Aquificales</taxon>
        <taxon>Aquificaceae</taxon>
        <taxon>Aquifex</taxon>
    </lineage>
</organism>
<evidence type="ECO:0000255" key="1">
    <source>
        <dbReference type="HAMAP-Rule" id="MF_01940"/>
    </source>
</evidence>
<protein>
    <recommendedName>
        <fullName evidence="1">RNA 2',3'-cyclic phosphodiesterase</fullName>
        <shortName evidence="1">RNA 2',3'-CPDase</shortName>
        <ecNumber evidence="1">3.1.4.58</ecNumber>
    </recommendedName>
</protein>
<accession>O66967</accession>
<comment type="function">
    <text evidence="1">Hydrolyzes RNA 2',3'-cyclic phosphodiester to an RNA 2'-phosphomonoester.</text>
</comment>
<comment type="catalytic activity">
    <reaction evidence="1">
        <text>a 3'-end 2',3'-cyclophospho-ribonucleotide-RNA + H2O = a 3'-end 2'-phospho-ribonucleotide-RNA + H(+)</text>
        <dbReference type="Rhea" id="RHEA:11828"/>
        <dbReference type="Rhea" id="RHEA-COMP:10464"/>
        <dbReference type="Rhea" id="RHEA-COMP:17353"/>
        <dbReference type="ChEBI" id="CHEBI:15377"/>
        <dbReference type="ChEBI" id="CHEBI:15378"/>
        <dbReference type="ChEBI" id="CHEBI:83064"/>
        <dbReference type="ChEBI" id="CHEBI:173113"/>
        <dbReference type="EC" id="3.1.4.58"/>
    </reaction>
</comment>
<comment type="similarity">
    <text evidence="1">Belongs to the 2H phosphoesterase superfamily. ThpR family.</text>
</comment>
<feature type="chain" id="PRO_0000138966" description="RNA 2',3'-cyclic phosphodiesterase">
    <location>
        <begin position="1"/>
        <end position="188"/>
    </location>
</feature>
<feature type="short sequence motif" description="HXTX 1" evidence="1">
    <location>
        <begin position="42"/>
        <end position="45"/>
    </location>
</feature>
<feature type="short sequence motif" description="HXTX 2" evidence="1">
    <location>
        <begin position="130"/>
        <end position="133"/>
    </location>
</feature>
<feature type="active site" description="Proton donor" evidence="1">
    <location>
        <position position="42"/>
    </location>
</feature>
<feature type="active site" description="Proton acceptor" evidence="1">
    <location>
        <position position="130"/>
    </location>
</feature>
<keyword id="KW-0378">Hydrolase</keyword>
<keyword id="KW-1185">Reference proteome</keyword>
<gene>
    <name type="ordered locus">aq_768</name>
</gene>
<name>THPR_AQUAE</name>
<proteinExistence type="inferred from homology"/>
<reference key="1">
    <citation type="journal article" date="1998" name="Nature">
        <title>The complete genome of the hyperthermophilic bacterium Aquifex aeolicus.</title>
        <authorList>
            <person name="Deckert G."/>
            <person name="Warren P.V."/>
            <person name="Gaasterland T."/>
            <person name="Young W.G."/>
            <person name="Lenox A.L."/>
            <person name="Graham D.E."/>
            <person name="Overbeek R."/>
            <person name="Snead M.A."/>
            <person name="Keller M."/>
            <person name="Aujay M."/>
            <person name="Huber R."/>
            <person name="Feldman R.A."/>
            <person name="Short J.M."/>
            <person name="Olsen G.J."/>
            <person name="Swanson R.V."/>
        </authorList>
    </citation>
    <scope>NUCLEOTIDE SEQUENCE [LARGE SCALE GENOMIC DNA]</scope>
    <source>
        <strain>VF5</strain>
    </source>
</reference>
<sequence length="188" mass="21366">MKVVRAFVGFFTSKSINEVAERIKKEVDLKIMGKWVEPQNVHMTLQFLGDITEAQAIEVIKNLQEISKKNIPFRIKYKGLGVFPDVKRPRVLWIGVSEGANKLTNLAKEVARLNAKKGIIPKNSKNFVPHVTICRIKSYDRKTLNELLRKYRTVEFGEDEVNKIALISSTLTSVGPIYTVVEEFYLGG</sequence>